<evidence type="ECO:0000255" key="1">
    <source>
        <dbReference type="HAMAP-Rule" id="MF_01656"/>
    </source>
</evidence>
<protein>
    <recommendedName>
        <fullName evidence="1">4-hydroxy-2-oxovalerate aldolase 3</fullName>
        <shortName evidence="1">HOA 3</shortName>
        <ecNumber evidence="1">4.1.3.39</ecNumber>
    </recommendedName>
    <alternativeName>
        <fullName evidence="1">4-hydroxy-2-keto-pentanoic acid aldolase 3</fullName>
    </alternativeName>
    <alternativeName>
        <fullName evidence="1">4-hydroxy-2-oxopentanoate aldolase 3</fullName>
    </alternativeName>
</protein>
<sequence length="339" mass="36106">MRSSWDIRVTDTSLRDGSHHKRHQFTGEEVRAIVGALDHAGVPVIEVTHGDGLGGSSFNYGFSKVPEQELISIAVDTAKNAKIAFLMLPGLGIKDDIIVAQDNGASICRIATHCTEADVSIQHFGLARDRGLETVGFLMMAHSIAPEKLAKQARIMADAGCQCVYVVDSAGALVLEQVSDRVEALVQELGSDAQVGFHGHENLGLGVANSIAAVRAGAKQIDGSTRRFGAGAGNAPVEAFVGVCDKIGVKTGIDFFAIADAAEDVVRPAMPAECLLDRQALMMGYAGVYSSFLKHAERQAERYGVSSAELLVRAGKRKLVGGQEDQLIDIALELQRERL</sequence>
<keyword id="KW-0058">Aromatic hydrocarbons catabolism</keyword>
<keyword id="KW-0456">Lyase</keyword>
<keyword id="KW-0464">Manganese</keyword>
<keyword id="KW-0479">Metal-binding</keyword>
<proteinExistence type="inferred from homology"/>
<feature type="chain" id="PRO_0000387905" description="4-hydroxy-2-oxovalerate aldolase 3">
    <location>
        <begin position="1"/>
        <end position="339"/>
    </location>
</feature>
<feature type="domain" description="Pyruvate carboxyltransferase" evidence="1">
    <location>
        <begin position="7"/>
        <end position="259"/>
    </location>
</feature>
<feature type="active site" description="Proton acceptor" evidence="1">
    <location>
        <position position="19"/>
    </location>
</feature>
<feature type="binding site" evidence="1">
    <location>
        <begin position="15"/>
        <end position="16"/>
    </location>
    <ligand>
        <name>substrate</name>
    </ligand>
</feature>
<feature type="binding site" evidence="1">
    <location>
        <position position="16"/>
    </location>
    <ligand>
        <name>Mn(2+)</name>
        <dbReference type="ChEBI" id="CHEBI:29035"/>
    </ligand>
</feature>
<feature type="binding site" evidence="1">
    <location>
        <position position="169"/>
    </location>
    <ligand>
        <name>substrate</name>
    </ligand>
</feature>
<feature type="binding site" evidence="1">
    <location>
        <position position="198"/>
    </location>
    <ligand>
        <name>Mn(2+)</name>
        <dbReference type="ChEBI" id="CHEBI:29035"/>
    </ligand>
</feature>
<feature type="binding site" evidence="1">
    <location>
        <position position="198"/>
    </location>
    <ligand>
        <name>substrate</name>
    </ligand>
</feature>
<feature type="binding site" evidence="1">
    <location>
        <position position="200"/>
    </location>
    <ligand>
        <name>Mn(2+)</name>
        <dbReference type="ChEBI" id="CHEBI:29035"/>
    </ligand>
</feature>
<feature type="binding site" evidence="1">
    <location>
        <position position="289"/>
    </location>
    <ligand>
        <name>substrate</name>
    </ligand>
</feature>
<feature type="site" description="Transition state stabilizer" evidence="1">
    <location>
        <position position="15"/>
    </location>
</feature>
<name>HOA3_RHOJR</name>
<accession>Q0S815</accession>
<organism>
    <name type="scientific">Rhodococcus jostii (strain RHA1)</name>
    <dbReference type="NCBI Taxonomy" id="101510"/>
    <lineage>
        <taxon>Bacteria</taxon>
        <taxon>Bacillati</taxon>
        <taxon>Actinomycetota</taxon>
        <taxon>Actinomycetes</taxon>
        <taxon>Mycobacteriales</taxon>
        <taxon>Nocardiaceae</taxon>
        <taxon>Rhodococcus</taxon>
    </lineage>
</organism>
<gene>
    <name type="primary">hsaF</name>
    <name type="ordered locus">RHA1_ro04535</name>
</gene>
<comment type="catalytic activity">
    <reaction evidence="1">
        <text>(S)-4-hydroxy-2-oxopentanoate = acetaldehyde + pyruvate</text>
        <dbReference type="Rhea" id="RHEA:22624"/>
        <dbReference type="ChEBI" id="CHEBI:15343"/>
        <dbReference type="ChEBI" id="CHEBI:15361"/>
        <dbReference type="ChEBI" id="CHEBI:73143"/>
        <dbReference type="EC" id="4.1.3.39"/>
    </reaction>
</comment>
<comment type="similarity">
    <text evidence="1">Belongs to the 4-hydroxy-2-oxovalerate aldolase family.</text>
</comment>
<dbReference type="EC" id="4.1.3.39" evidence="1"/>
<dbReference type="EMBL" id="CP000431">
    <property type="protein sequence ID" value="ABG96321.1"/>
    <property type="molecule type" value="Genomic_DNA"/>
</dbReference>
<dbReference type="RefSeq" id="WP_009477596.1">
    <property type="nucleotide sequence ID" value="NC_008268.1"/>
</dbReference>
<dbReference type="SMR" id="Q0S815"/>
<dbReference type="KEGG" id="rha:RHA1_ro04535"/>
<dbReference type="eggNOG" id="COG0119">
    <property type="taxonomic scope" value="Bacteria"/>
</dbReference>
<dbReference type="HOGENOM" id="CLU_049173_0_0_11"/>
<dbReference type="OrthoDB" id="9803573at2"/>
<dbReference type="BioCyc" id="MetaCyc:MONOMER-16915"/>
<dbReference type="Proteomes" id="UP000008710">
    <property type="component" value="Chromosome"/>
</dbReference>
<dbReference type="GO" id="GO:0003852">
    <property type="term" value="F:2-isopropylmalate synthase activity"/>
    <property type="evidence" value="ECO:0007669"/>
    <property type="project" value="TreeGrafter"/>
</dbReference>
<dbReference type="GO" id="GO:0008701">
    <property type="term" value="F:4-hydroxy-2-oxovalerate aldolase activity"/>
    <property type="evidence" value="ECO:0007669"/>
    <property type="project" value="UniProtKB-UniRule"/>
</dbReference>
<dbReference type="GO" id="GO:0030145">
    <property type="term" value="F:manganese ion binding"/>
    <property type="evidence" value="ECO:0007669"/>
    <property type="project" value="UniProtKB-UniRule"/>
</dbReference>
<dbReference type="GO" id="GO:0009056">
    <property type="term" value="P:catabolic process"/>
    <property type="evidence" value="ECO:0007669"/>
    <property type="project" value="UniProtKB-KW"/>
</dbReference>
<dbReference type="GO" id="GO:0009098">
    <property type="term" value="P:L-leucine biosynthetic process"/>
    <property type="evidence" value="ECO:0007669"/>
    <property type="project" value="TreeGrafter"/>
</dbReference>
<dbReference type="CDD" id="cd07943">
    <property type="entry name" value="DRE_TIM_HOA"/>
    <property type="match status" value="1"/>
</dbReference>
<dbReference type="Gene3D" id="1.10.8.60">
    <property type="match status" value="1"/>
</dbReference>
<dbReference type="Gene3D" id="3.20.20.70">
    <property type="entry name" value="Aldolase class I"/>
    <property type="match status" value="1"/>
</dbReference>
<dbReference type="HAMAP" id="MF_01656">
    <property type="entry name" value="HOA"/>
    <property type="match status" value="1"/>
</dbReference>
<dbReference type="InterPro" id="IPR050073">
    <property type="entry name" value="2-IPM_HCS-like"/>
</dbReference>
<dbReference type="InterPro" id="IPR017629">
    <property type="entry name" value="4OH_2_O-val_aldolase"/>
</dbReference>
<dbReference type="InterPro" id="IPR013785">
    <property type="entry name" value="Aldolase_TIM"/>
</dbReference>
<dbReference type="InterPro" id="IPR012425">
    <property type="entry name" value="DmpG_comm"/>
</dbReference>
<dbReference type="InterPro" id="IPR035685">
    <property type="entry name" value="DRE_TIM_HOA"/>
</dbReference>
<dbReference type="InterPro" id="IPR000891">
    <property type="entry name" value="PYR_CT"/>
</dbReference>
<dbReference type="NCBIfam" id="TIGR03217">
    <property type="entry name" value="4OH_2_O_val_ald"/>
    <property type="match status" value="1"/>
</dbReference>
<dbReference type="NCBIfam" id="NF006049">
    <property type="entry name" value="PRK08195.1"/>
    <property type="match status" value="1"/>
</dbReference>
<dbReference type="PANTHER" id="PTHR10277:SF9">
    <property type="entry name" value="2-ISOPROPYLMALATE SYNTHASE 1, CHLOROPLASTIC-RELATED"/>
    <property type="match status" value="1"/>
</dbReference>
<dbReference type="PANTHER" id="PTHR10277">
    <property type="entry name" value="HOMOCITRATE SYNTHASE-RELATED"/>
    <property type="match status" value="1"/>
</dbReference>
<dbReference type="Pfam" id="PF07836">
    <property type="entry name" value="DmpG_comm"/>
    <property type="match status" value="1"/>
</dbReference>
<dbReference type="Pfam" id="PF00682">
    <property type="entry name" value="HMGL-like"/>
    <property type="match status" value="1"/>
</dbReference>
<dbReference type="SUPFAM" id="SSF51569">
    <property type="entry name" value="Aldolase"/>
    <property type="match status" value="1"/>
</dbReference>
<dbReference type="SUPFAM" id="SSF89000">
    <property type="entry name" value="post-HMGL domain-like"/>
    <property type="match status" value="1"/>
</dbReference>
<dbReference type="PROSITE" id="PS50991">
    <property type="entry name" value="PYR_CT"/>
    <property type="match status" value="1"/>
</dbReference>
<reference key="1">
    <citation type="journal article" date="2006" name="Proc. Natl. Acad. Sci. U.S.A.">
        <title>The complete genome of Rhodococcus sp. RHA1 provides insights into a catabolic powerhouse.</title>
        <authorList>
            <person name="McLeod M.P."/>
            <person name="Warren R.L."/>
            <person name="Hsiao W.W.L."/>
            <person name="Araki N."/>
            <person name="Myhre M."/>
            <person name="Fernandes C."/>
            <person name="Miyazawa D."/>
            <person name="Wong W."/>
            <person name="Lillquist A.L."/>
            <person name="Wang D."/>
            <person name="Dosanjh M."/>
            <person name="Hara H."/>
            <person name="Petrescu A."/>
            <person name="Morin R.D."/>
            <person name="Yang G."/>
            <person name="Stott J.M."/>
            <person name="Schein J.E."/>
            <person name="Shin H."/>
            <person name="Smailus D."/>
            <person name="Siddiqui A.S."/>
            <person name="Marra M.A."/>
            <person name="Jones S.J.M."/>
            <person name="Holt R."/>
            <person name="Brinkman F.S.L."/>
            <person name="Miyauchi K."/>
            <person name="Fukuda M."/>
            <person name="Davies J.E."/>
            <person name="Mohn W.W."/>
            <person name="Eltis L.D."/>
        </authorList>
    </citation>
    <scope>NUCLEOTIDE SEQUENCE [LARGE SCALE GENOMIC DNA]</scope>
    <source>
        <strain>RHA1</strain>
    </source>
</reference>